<keyword id="KW-1185">Reference proteome</keyword>
<keyword id="KW-0687">Ribonucleoprotein</keyword>
<keyword id="KW-0689">Ribosomal protein</keyword>
<keyword id="KW-0694">RNA-binding</keyword>
<keyword id="KW-0699">rRNA-binding</keyword>
<comment type="function">
    <text evidence="1">One of two assembly initiator proteins, it binds directly to the 5'-end of the 23S rRNA, where it nucleates assembly of the 50S subunit.</text>
</comment>
<comment type="function">
    <text evidence="1">One of the proteins that surrounds the polypeptide exit tunnel on the outside of the subunit.</text>
</comment>
<comment type="subunit">
    <text evidence="1">Part of the 50S ribosomal subunit.</text>
</comment>
<comment type="similarity">
    <text evidence="1">Belongs to the universal ribosomal protein uL24 family.</text>
</comment>
<name>RL24_KOCRD</name>
<reference key="1">
    <citation type="journal article" date="2008" name="J. Bacteriol.">
        <title>Complete genome sequence of the soil actinomycete Kocuria rhizophila.</title>
        <authorList>
            <person name="Takarada H."/>
            <person name="Sekine M."/>
            <person name="Kosugi H."/>
            <person name="Matsuo Y."/>
            <person name="Fujisawa T."/>
            <person name="Omata S."/>
            <person name="Kishi E."/>
            <person name="Shimizu A."/>
            <person name="Tsukatani N."/>
            <person name="Tanikawa S."/>
            <person name="Fujita N."/>
            <person name="Harayama S."/>
        </authorList>
    </citation>
    <scope>NUCLEOTIDE SEQUENCE [LARGE SCALE GENOMIC DNA]</scope>
    <source>
        <strain>ATCC 9341 / DSM 348 / NBRC 103217 / DC2201</strain>
    </source>
</reference>
<gene>
    <name evidence="1" type="primary">rplX</name>
    <name type="ordered locus">KRH_06270</name>
</gene>
<evidence type="ECO:0000255" key="1">
    <source>
        <dbReference type="HAMAP-Rule" id="MF_01326"/>
    </source>
</evidence>
<evidence type="ECO:0000256" key="2">
    <source>
        <dbReference type="SAM" id="MobiDB-lite"/>
    </source>
</evidence>
<evidence type="ECO:0000305" key="3"/>
<feature type="chain" id="PRO_0000355689" description="Large ribosomal subunit protein uL24">
    <location>
        <begin position="1"/>
        <end position="112"/>
    </location>
</feature>
<feature type="region of interest" description="Disordered" evidence="2">
    <location>
        <begin position="92"/>
        <end position="112"/>
    </location>
</feature>
<accession>B2GJ04</accession>
<dbReference type="EMBL" id="AP009152">
    <property type="protein sequence ID" value="BAG28974.1"/>
    <property type="molecule type" value="Genomic_DNA"/>
</dbReference>
<dbReference type="RefSeq" id="WP_012397699.1">
    <property type="nucleotide sequence ID" value="NC_010617.1"/>
</dbReference>
<dbReference type="SMR" id="B2GJ04"/>
<dbReference type="STRING" id="378753.KRH_06270"/>
<dbReference type="KEGG" id="krh:KRH_06270"/>
<dbReference type="eggNOG" id="COG0198">
    <property type="taxonomic scope" value="Bacteria"/>
</dbReference>
<dbReference type="HOGENOM" id="CLU_093315_2_0_11"/>
<dbReference type="OrthoDB" id="9807419at2"/>
<dbReference type="Proteomes" id="UP000008838">
    <property type="component" value="Chromosome"/>
</dbReference>
<dbReference type="GO" id="GO:1990904">
    <property type="term" value="C:ribonucleoprotein complex"/>
    <property type="evidence" value="ECO:0007669"/>
    <property type="project" value="UniProtKB-KW"/>
</dbReference>
<dbReference type="GO" id="GO:0005840">
    <property type="term" value="C:ribosome"/>
    <property type="evidence" value="ECO:0007669"/>
    <property type="project" value="UniProtKB-KW"/>
</dbReference>
<dbReference type="GO" id="GO:0019843">
    <property type="term" value="F:rRNA binding"/>
    <property type="evidence" value="ECO:0007669"/>
    <property type="project" value="UniProtKB-UniRule"/>
</dbReference>
<dbReference type="GO" id="GO:0003735">
    <property type="term" value="F:structural constituent of ribosome"/>
    <property type="evidence" value="ECO:0007669"/>
    <property type="project" value="InterPro"/>
</dbReference>
<dbReference type="GO" id="GO:0006412">
    <property type="term" value="P:translation"/>
    <property type="evidence" value="ECO:0007669"/>
    <property type="project" value="UniProtKB-UniRule"/>
</dbReference>
<dbReference type="CDD" id="cd06089">
    <property type="entry name" value="KOW_RPL26"/>
    <property type="match status" value="1"/>
</dbReference>
<dbReference type="Gene3D" id="2.30.30.30">
    <property type="match status" value="1"/>
</dbReference>
<dbReference type="HAMAP" id="MF_01326_B">
    <property type="entry name" value="Ribosomal_uL24_B"/>
    <property type="match status" value="1"/>
</dbReference>
<dbReference type="InterPro" id="IPR005824">
    <property type="entry name" value="KOW"/>
</dbReference>
<dbReference type="InterPro" id="IPR014722">
    <property type="entry name" value="Rib_uL2_dom2"/>
</dbReference>
<dbReference type="InterPro" id="IPR003256">
    <property type="entry name" value="Ribosomal_uL24"/>
</dbReference>
<dbReference type="InterPro" id="IPR005825">
    <property type="entry name" value="Ribosomal_uL24_CS"/>
</dbReference>
<dbReference type="InterPro" id="IPR041988">
    <property type="entry name" value="Ribosomal_uL24_KOW"/>
</dbReference>
<dbReference type="InterPro" id="IPR008991">
    <property type="entry name" value="Translation_prot_SH3-like_sf"/>
</dbReference>
<dbReference type="NCBIfam" id="TIGR01079">
    <property type="entry name" value="rplX_bact"/>
    <property type="match status" value="1"/>
</dbReference>
<dbReference type="PANTHER" id="PTHR12903">
    <property type="entry name" value="MITOCHONDRIAL RIBOSOMAL PROTEIN L24"/>
    <property type="match status" value="1"/>
</dbReference>
<dbReference type="Pfam" id="PF00467">
    <property type="entry name" value="KOW"/>
    <property type="match status" value="1"/>
</dbReference>
<dbReference type="Pfam" id="PF17136">
    <property type="entry name" value="ribosomal_L24"/>
    <property type="match status" value="1"/>
</dbReference>
<dbReference type="SMART" id="SM00739">
    <property type="entry name" value="KOW"/>
    <property type="match status" value="1"/>
</dbReference>
<dbReference type="SUPFAM" id="SSF50104">
    <property type="entry name" value="Translation proteins SH3-like domain"/>
    <property type="match status" value="1"/>
</dbReference>
<dbReference type="PROSITE" id="PS01108">
    <property type="entry name" value="RIBOSOMAL_L24"/>
    <property type="match status" value="1"/>
</dbReference>
<organism>
    <name type="scientific">Kocuria rhizophila (strain ATCC 9341 / DSM 348 / NBRC 103217 / DC2201)</name>
    <dbReference type="NCBI Taxonomy" id="378753"/>
    <lineage>
        <taxon>Bacteria</taxon>
        <taxon>Bacillati</taxon>
        <taxon>Actinomycetota</taxon>
        <taxon>Actinomycetes</taxon>
        <taxon>Micrococcales</taxon>
        <taxon>Micrococcaceae</taxon>
        <taxon>Kocuria</taxon>
    </lineage>
</organism>
<proteinExistence type="inferred from homology"/>
<protein>
    <recommendedName>
        <fullName evidence="1">Large ribosomal subunit protein uL24</fullName>
    </recommendedName>
    <alternativeName>
        <fullName evidence="3">50S ribosomal protein L24</fullName>
    </alternativeName>
</protein>
<sequence>MAKFKIKTGDLVQVITGKNKGEQGKVLRVITETSRVVVEGVNVVTKHKRANAQGEAGGLVKSEAPIHISNVMLGDPETGKPTRVGYRTETVERDGKQKTVRVRVSKSTGKDL</sequence>